<organism>
    <name type="scientific">Rattus norvegicus</name>
    <name type="common">Rat</name>
    <dbReference type="NCBI Taxonomy" id="10116"/>
    <lineage>
        <taxon>Eukaryota</taxon>
        <taxon>Metazoa</taxon>
        <taxon>Chordata</taxon>
        <taxon>Craniata</taxon>
        <taxon>Vertebrata</taxon>
        <taxon>Euteleostomi</taxon>
        <taxon>Mammalia</taxon>
        <taxon>Eutheria</taxon>
        <taxon>Euarchontoglires</taxon>
        <taxon>Glires</taxon>
        <taxon>Rodentia</taxon>
        <taxon>Myomorpha</taxon>
        <taxon>Muroidea</taxon>
        <taxon>Muridae</taxon>
        <taxon>Murinae</taxon>
        <taxon>Rattus</taxon>
    </lineage>
</organism>
<feature type="chain" id="PRO_0000147008" description="Cysteine sulfinic acid decarboxylase">
    <location>
        <begin position="1"/>
        <end position="493"/>
    </location>
</feature>
<feature type="modified residue" description="N6-(pyridoxal phosphate)lysine" evidence="1">
    <location>
        <position position="305"/>
    </location>
</feature>
<feature type="sequence conflict" description="In Ref. 1; AAC42063." evidence="4" ref="1">
    <original>A</original>
    <variation>V</variation>
    <location>
        <position position="178"/>
    </location>
</feature>
<feature type="sequence conflict" description="In Ref. 1; AAC42063." evidence="4" ref="1">
    <original>HGTRANFFRMVVANPILVQADIDFLLGELERLGQDL</original>
    <variation>MGPGPTSSEWWWPTPYWSRPI</variation>
    <location>
        <begin position="458"/>
        <end position="493"/>
    </location>
</feature>
<keyword id="KW-0210">Decarboxylase</keyword>
<keyword id="KW-0903">Direct protein sequencing</keyword>
<keyword id="KW-0456">Lyase</keyword>
<keyword id="KW-0663">Pyridoxal phosphate</keyword>
<keyword id="KW-1185">Reference proteome</keyword>
<dbReference type="EC" id="4.1.1.29" evidence="2"/>
<dbReference type="EC" id="4.1.1.11" evidence="2"/>
<dbReference type="EMBL" id="M64755">
    <property type="protein sequence ID" value="AAC42063.1"/>
    <property type="molecule type" value="mRNA"/>
</dbReference>
<dbReference type="EMBL" id="X94152">
    <property type="protein sequence ID" value="CAA63868.1"/>
    <property type="molecule type" value="mRNA"/>
</dbReference>
<dbReference type="EMBL" id="AJ132661">
    <property type="protein sequence ID" value="CAB54561.1"/>
    <property type="molecule type" value="mRNA"/>
</dbReference>
<dbReference type="EMBL" id="BC081804">
    <property type="protein sequence ID" value="AAH81804.1"/>
    <property type="molecule type" value="mRNA"/>
</dbReference>
<dbReference type="EMBL" id="AF115343">
    <property type="protein sequence ID" value="AAD47908.1"/>
    <property type="molecule type" value="Genomic_DNA"/>
</dbReference>
<dbReference type="PIR" id="S71489">
    <property type="entry name" value="S71489"/>
</dbReference>
<dbReference type="RefSeq" id="NP_068518.1">
    <property type="nucleotide sequence ID" value="NM_021750.3"/>
</dbReference>
<dbReference type="RefSeq" id="XP_006242500.1">
    <property type="nucleotide sequence ID" value="XM_006242438.5"/>
</dbReference>
<dbReference type="RefSeq" id="XP_006242501.1">
    <property type="nucleotide sequence ID" value="XM_006242439.4"/>
</dbReference>
<dbReference type="RefSeq" id="XP_006242502.1">
    <property type="nucleotide sequence ID" value="XM_006242440.5"/>
</dbReference>
<dbReference type="RefSeq" id="XP_006242504.1">
    <property type="nucleotide sequence ID" value="XM_006242442.3"/>
</dbReference>
<dbReference type="RefSeq" id="XP_008764004.1">
    <property type="nucleotide sequence ID" value="XM_008765782.2"/>
</dbReference>
<dbReference type="RefSeq" id="XP_017450565.1">
    <property type="nucleotide sequence ID" value="XM_017595076.1"/>
</dbReference>
<dbReference type="RefSeq" id="XP_038935762.1">
    <property type="nucleotide sequence ID" value="XM_039079834.2"/>
</dbReference>
<dbReference type="RefSeq" id="XP_038935763.1">
    <property type="nucleotide sequence ID" value="XM_039079835.2"/>
</dbReference>
<dbReference type="RefSeq" id="XP_063120254.1">
    <property type="nucleotide sequence ID" value="XM_063264184.1"/>
</dbReference>
<dbReference type="RefSeq" id="XP_063120255.1">
    <property type="nucleotide sequence ID" value="XM_063264185.1"/>
</dbReference>
<dbReference type="RefSeq" id="XP_063120256.1">
    <property type="nucleotide sequence ID" value="XM_063264186.1"/>
</dbReference>
<dbReference type="RefSeq" id="XP_063120257.1">
    <property type="nucleotide sequence ID" value="XM_063264187.1"/>
</dbReference>
<dbReference type="SMR" id="Q64611"/>
<dbReference type="FunCoup" id="Q64611">
    <property type="interactions" value="131"/>
</dbReference>
<dbReference type="STRING" id="10116.ENSRNOP00000016205"/>
<dbReference type="iPTMnet" id="Q64611"/>
<dbReference type="PhosphoSitePlus" id="Q64611"/>
<dbReference type="PaxDb" id="10116-ENSRNOP00000016205"/>
<dbReference type="Ensembl" id="ENSRNOT00000079678.2">
    <property type="protein sequence ID" value="ENSRNOP00000073508.2"/>
    <property type="gene ID" value="ENSRNOG00000011573.7"/>
</dbReference>
<dbReference type="GeneID" id="60356"/>
<dbReference type="KEGG" id="rno:60356"/>
<dbReference type="UCSC" id="RGD:621030">
    <property type="organism name" value="rat"/>
</dbReference>
<dbReference type="AGR" id="RGD:621030"/>
<dbReference type="CTD" id="51380"/>
<dbReference type="RGD" id="621030">
    <property type="gene designation" value="Csad"/>
</dbReference>
<dbReference type="eggNOG" id="KOG0629">
    <property type="taxonomic scope" value="Eukaryota"/>
</dbReference>
<dbReference type="GeneTree" id="ENSGT00940000158240"/>
<dbReference type="HOGENOM" id="CLU_011856_0_0_1"/>
<dbReference type="InParanoid" id="Q64611"/>
<dbReference type="OMA" id="CVDLHKW"/>
<dbReference type="OrthoDB" id="31625at9989"/>
<dbReference type="PhylomeDB" id="Q64611"/>
<dbReference type="TreeFam" id="TF314688"/>
<dbReference type="BioCyc" id="MetaCyc:MONOMER-13316"/>
<dbReference type="UniPathway" id="UPA00012">
    <property type="reaction ID" value="UER00538"/>
</dbReference>
<dbReference type="PRO" id="PR:Q64611"/>
<dbReference type="Proteomes" id="UP000002494">
    <property type="component" value="Chromosome 7"/>
</dbReference>
<dbReference type="Bgee" id="ENSRNOG00000011573">
    <property type="expression patterns" value="Expressed in liver and 19 other cell types or tissues"/>
</dbReference>
<dbReference type="ExpressionAtlas" id="Q64611">
    <property type="expression patterns" value="baseline and differential"/>
</dbReference>
<dbReference type="GO" id="GO:0005737">
    <property type="term" value="C:cytoplasm"/>
    <property type="evidence" value="ECO:0000314"/>
    <property type="project" value="UniProtKB"/>
</dbReference>
<dbReference type="GO" id="GO:0005829">
    <property type="term" value="C:cytosol"/>
    <property type="evidence" value="ECO:0000304"/>
    <property type="project" value="Reactome"/>
</dbReference>
<dbReference type="GO" id="GO:0004068">
    <property type="term" value="F:aspartate 1-decarboxylase activity"/>
    <property type="evidence" value="ECO:0007669"/>
    <property type="project" value="UniProtKB-EC"/>
</dbReference>
<dbReference type="GO" id="GO:0030170">
    <property type="term" value="F:pyridoxal phosphate binding"/>
    <property type="evidence" value="ECO:0007669"/>
    <property type="project" value="InterPro"/>
</dbReference>
<dbReference type="GO" id="GO:0004782">
    <property type="term" value="F:sulfinoalanine decarboxylase activity"/>
    <property type="evidence" value="ECO:0000314"/>
    <property type="project" value="UniProtKB"/>
</dbReference>
<dbReference type="GO" id="GO:0019449">
    <property type="term" value="P:L-cysteine catabolic process to hypotaurine"/>
    <property type="evidence" value="ECO:0000314"/>
    <property type="project" value="UniProtKB"/>
</dbReference>
<dbReference type="GO" id="GO:0019452">
    <property type="term" value="P:L-cysteine catabolic process to taurine"/>
    <property type="evidence" value="ECO:0000314"/>
    <property type="project" value="UniProtKB"/>
</dbReference>
<dbReference type="GO" id="GO:0042412">
    <property type="term" value="P:taurine biosynthetic process"/>
    <property type="evidence" value="ECO:0000266"/>
    <property type="project" value="RGD"/>
</dbReference>
<dbReference type="CDD" id="cd06450">
    <property type="entry name" value="DOPA_deC_like"/>
    <property type="match status" value="1"/>
</dbReference>
<dbReference type="FunFam" id="3.40.640.10:FF:000016">
    <property type="entry name" value="Glutamate decarboxylase like 1"/>
    <property type="match status" value="1"/>
</dbReference>
<dbReference type="Gene3D" id="3.90.1150.170">
    <property type="match status" value="1"/>
</dbReference>
<dbReference type="Gene3D" id="3.40.640.10">
    <property type="entry name" value="Type I PLP-dependent aspartate aminotransferase-like (Major domain)"/>
    <property type="match status" value="1"/>
</dbReference>
<dbReference type="InterPro" id="IPR002129">
    <property type="entry name" value="PyrdxlP-dep_de-COase"/>
</dbReference>
<dbReference type="InterPro" id="IPR015424">
    <property type="entry name" value="PyrdxlP-dep_Trfase"/>
</dbReference>
<dbReference type="InterPro" id="IPR015421">
    <property type="entry name" value="PyrdxlP-dep_Trfase_major"/>
</dbReference>
<dbReference type="InterPro" id="IPR021115">
    <property type="entry name" value="Pyridoxal-P_BS"/>
</dbReference>
<dbReference type="PANTHER" id="PTHR45677:SF8">
    <property type="entry name" value="CYSTEINE SULFINIC ACID DECARBOXYLASE"/>
    <property type="match status" value="1"/>
</dbReference>
<dbReference type="PANTHER" id="PTHR45677">
    <property type="entry name" value="GLUTAMATE DECARBOXYLASE-RELATED"/>
    <property type="match status" value="1"/>
</dbReference>
<dbReference type="Pfam" id="PF00282">
    <property type="entry name" value="Pyridoxal_deC"/>
    <property type="match status" value="1"/>
</dbReference>
<dbReference type="SUPFAM" id="SSF53383">
    <property type="entry name" value="PLP-dependent transferases"/>
    <property type="match status" value="1"/>
</dbReference>
<dbReference type="PROSITE" id="PS00392">
    <property type="entry name" value="DDC_GAD_HDC_YDC"/>
    <property type="match status" value="1"/>
</dbReference>
<name>CSAD_RAT</name>
<gene>
    <name type="primary">Csad</name>
    <name type="synonym">Csd</name>
</gene>
<accession>Q64611</accession>
<accession>Q546T1</accession>
<accession>Q64577</accession>
<accession>Q9R1F6</accession>
<protein>
    <recommendedName>
        <fullName>Cysteine sulfinic acid decarboxylase</fullName>
        <ecNumber evidence="2">4.1.1.29</ecNumber>
    </recommendedName>
    <alternativeName>
        <fullName evidence="4">Aspartate 1-decarboxylase</fullName>
        <ecNumber evidence="2">4.1.1.11</ecNumber>
    </alternativeName>
    <alternativeName>
        <fullName>Cysteine-sulfinate decarboxylase</fullName>
    </alternativeName>
    <alternativeName>
        <fullName>Sulfinoalanine decarboxylase</fullName>
    </alternativeName>
</protein>
<sequence length="493" mass="55249">MADSKPLRTLDGDPVAVEALLRDVFGIVVDEAIRKGTNASEKVCEWKEPEELKQLLDLELQSQGESRERILERCRAVIHYSVKTGHPRFFNQLFSGLDPHALAGRIITESLNTSQYTYEIAPVFVLMEEEVLKKLRALVGWNTGDGVFCPGGSISNMYAINLARFQRYPDCKQRGLRALPPLALFTSKECHYSITKGAAFLGLGTDSVRVVKADERGKMIPEDLERQISLAEAEGSVPFLVSATSGTTVLGAFDPLDAIADVCQRHGLWLHVDAAWGGSVLLSRTHRHLLDGIQRADSVAWNPHKLLAAGLQCSALLLRDTSNLLKRCHGSQASYLFQQDKFYNVALDTGDKVVQCGRRVDCLKLWLMWKAQGGQGLEWRIDQAFALTRYLVEEIKKREGFELVMEPEFVNVCFWFVPPSLRGKKESPDYSQRLSQVAPVLKERMVKKGTMMIGYQPHGTRANFFRMVVANPILVQADIDFLLGELERLGQDL</sequence>
<proteinExistence type="evidence at protein level"/>
<evidence type="ECO:0000250" key="1"/>
<evidence type="ECO:0000250" key="2">
    <source>
        <dbReference type="UniProtKB" id="Q9DBE0"/>
    </source>
</evidence>
<evidence type="ECO:0000269" key="3">
    <source>
    </source>
</evidence>
<evidence type="ECO:0000305" key="4"/>
<comment type="function">
    <text evidence="2">Catalyzes the decarboxylation of L-aspartate, 3-sulfino-L-alanine (cysteine sulfinic acid), and L-cysteate to beta-alanine, hypotaurine and taurine, respectively. The preferred substrate is 3-sulfino-L-alanine. Does not exhibit any decarboxylation activity toward glutamate.</text>
</comment>
<comment type="catalytic activity">
    <reaction evidence="2">
        <text>L-aspartate + H(+) = beta-alanine + CO2</text>
        <dbReference type="Rhea" id="RHEA:19497"/>
        <dbReference type="ChEBI" id="CHEBI:15378"/>
        <dbReference type="ChEBI" id="CHEBI:16526"/>
        <dbReference type="ChEBI" id="CHEBI:29991"/>
        <dbReference type="ChEBI" id="CHEBI:57966"/>
        <dbReference type="EC" id="4.1.1.11"/>
    </reaction>
</comment>
<comment type="catalytic activity">
    <reaction evidence="2">
        <text>3-sulfino-L-alanine + H(+) = hypotaurine + CO2</text>
        <dbReference type="Rhea" id="RHEA:16877"/>
        <dbReference type="ChEBI" id="CHEBI:15378"/>
        <dbReference type="ChEBI" id="CHEBI:16526"/>
        <dbReference type="ChEBI" id="CHEBI:57853"/>
        <dbReference type="ChEBI" id="CHEBI:61085"/>
        <dbReference type="EC" id="4.1.1.29"/>
    </reaction>
</comment>
<comment type="catalytic activity">
    <reaction evidence="2">
        <text>L-cysteate + H(+) = taurine + CO2</text>
        <dbReference type="Rhea" id="RHEA:25221"/>
        <dbReference type="ChEBI" id="CHEBI:15378"/>
        <dbReference type="ChEBI" id="CHEBI:16526"/>
        <dbReference type="ChEBI" id="CHEBI:58090"/>
        <dbReference type="ChEBI" id="CHEBI:507393"/>
        <dbReference type="EC" id="4.1.1.29"/>
    </reaction>
</comment>
<comment type="cofactor">
    <cofactor>
        <name>pyridoxal 5'-phosphate</name>
        <dbReference type="ChEBI" id="CHEBI:597326"/>
    </cofactor>
</comment>
<comment type="pathway">
    <text>Organosulfur biosynthesis; taurine biosynthesis; hypotaurine from L-cysteine: step 2/2.</text>
</comment>
<comment type="subunit">
    <text evidence="2">Homodimer.</text>
</comment>
<comment type="tissue specificity">
    <text evidence="3">Expressed in brain, liver and kidney.</text>
</comment>
<comment type="similarity">
    <text evidence="4">Belongs to the group II decarboxylase family.</text>
</comment>
<reference key="1">
    <citation type="journal article" date="1995" name="Biochim. Biophys. Acta">
        <title>Cloning and characterization of rat cysteine sulfinic acid decarboxylase.</title>
        <authorList>
            <person name="Kaisaki P.J."/>
            <person name="Jerkins A.A."/>
            <person name="Goodspeed D.C."/>
            <person name="Steele R.D."/>
        </authorList>
    </citation>
    <scope>NUCLEOTIDE SEQUENCE [MRNA]</scope>
    <source>
        <strain>Sprague-Dawley</strain>
        <tissue>Liver</tissue>
    </source>
</reference>
<reference key="2">
    <citation type="journal article" date="1995" name="Biochim. Biophys. Acta">
        <authorList>
            <person name="Kaisaki P.J."/>
            <person name="Jerkins A.A."/>
            <person name="Goodspeed D.C."/>
            <person name="Steele R.D."/>
        </authorList>
    </citation>
    <scope>ERRATUM OF PUBMED:7772604</scope>
</reference>
<reference key="3">
    <citation type="journal article" date="1996" name="Biochim. Biophys. Acta">
        <title>Molecular cloning and sequence analysis of the cDNA encoding rat liver cysteine sulfinate decarboxylase (CSD).</title>
        <authorList>
            <person name="Reymond I."/>
            <person name="Sergeant A."/>
            <person name="Tappaz M."/>
        </authorList>
    </citation>
    <scope>NUCLEOTIDE SEQUENCE [MRNA]</scope>
    <scope>PARTIAL PROTEIN SEQUENCE</scope>
    <source>
        <strain>Sprague-Dawley</strain>
        <tissue>Liver</tissue>
    </source>
</reference>
<reference key="4">
    <citation type="journal article" date="1999" name="J. Neurochem.">
        <title>Characterization of the cDNA coding for rat brain cysteine sulfinate decarboxylase: brain and liver enzymes are identical proteins encoded by two distinct mRNAs.</title>
        <authorList>
            <person name="Tappaz M."/>
            <person name="Bitoun M."/>
            <person name="Reymond I."/>
            <person name="Sergeant A."/>
        </authorList>
    </citation>
    <scope>NUCLEOTIDE SEQUENCE [MRNA]</scope>
    <scope>TISSUE SPECIFICITY</scope>
    <source>
        <strain>Sprague-Dawley</strain>
        <tissue>Brain</tissue>
    </source>
</reference>
<reference key="5">
    <citation type="journal article" date="2004" name="Genome Res.">
        <title>The status, quality, and expansion of the NIH full-length cDNA project: the Mammalian Gene Collection (MGC).</title>
        <authorList>
            <consortium name="The MGC Project Team"/>
        </authorList>
    </citation>
    <scope>NUCLEOTIDE SEQUENCE [LARGE SCALE MRNA]</scope>
    <source>
        <tissue>Kidney</tissue>
    </source>
</reference>
<reference key="6">
    <citation type="submission" date="1998-12" db="EMBL/GenBank/DDBJ databases">
        <authorList>
            <person name="Pritchard J.E."/>
            <person name="Ramsden D.B."/>
        </authorList>
    </citation>
    <scope>NUCLEOTIDE SEQUENCE [GENOMIC DNA] OF 1-233</scope>
    <source>
        <strain>Wistar</strain>
    </source>
</reference>